<protein>
    <recommendedName>
        <fullName>Small delta antigen</fullName>
        <shortName>S-HDAg</shortName>
    </recommendedName>
    <alternativeName>
        <fullName>p24</fullName>
    </alternativeName>
</protein>
<organismHost>
    <name type="scientific">Homo sapiens</name>
    <name type="common">Human</name>
    <dbReference type="NCBI Taxonomy" id="9606"/>
</organismHost>
<proteinExistence type="inferred from homology"/>
<keyword id="KW-0007">Acetylation</keyword>
<keyword id="KW-1048">Host nucleus</keyword>
<keyword id="KW-0945">Host-virus interaction</keyword>
<keyword id="KW-0488">Methylation</keyword>
<keyword id="KW-0597">Phosphoprotein</keyword>
<keyword id="KW-0691">RNA editing</keyword>
<keyword id="KW-0694">RNA-binding</keyword>
<keyword id="KW-1163">Viral penetration into host nucleus</keyword>
<keyword id="KW-0946">Virion</keyword>
<keyword id="KW-1160">Virus entry into host cell</keyword>
<reference key="1">
    <citation type="journal article" date="2001" name="J. Gen. Virol.">
        <title>Characterization of hepatitis D virus genotype III among Yucpa Indians in Venezuela.</title>
        <authorList>
            <person name="Nakano T."/>
            <person name="Shapiro C.N."/>
            <person name="Hadler S.C."/>
            <person name="Casey J.L."/>
            <person name="Mizokami M."/>
            <person name="Orito E."/>
            <person name="Robertson B.H."/>
        </authorList>
    </citation>
    <scope>NUCLEOTIDE SEQUENCE [GENOMIC RNA]</scope>
    <scope>RNA EDITING</scope>
</reference>
<reference key="2">
    <citation type="journal article" date="2005" name="Acta Virol.">
        <title>Hepatitis D.</title>
        <authorList>
            <person name="Husa P."/>
            <person name="Linhartova A."/>
            <person name="Nemecek V."/>
            <person name="Husova L."/>
        </authorList>
    </citation>
    <scope>REVIEW</scope>
</reference>
<reference key="3">
    <citation type="journal article" date="2006" name="Curr. Top. Microbiol. Immunol.">
        <title>Post-translational modification of delta antigen of hepatitis D virus.</title>
        <authorList>
            <person name="Huang W.H."/>
            <person name="Chen C.W."/>
            <person name="Wu H.L."/>
            <person name="Chen P.J."/>
        </authorList>
    </citation>
    <scope>REVIEW</scope>
</reference>
<feature type="chain" id="PRO_0000038155" description="Small delta antigen">
    <location>
        <begin position="1"/>
        <end position="194"/>
    </location>
</feature>
<feature type="domain" description="HDAg" evidence="4">
    <location>
        <begin position="20"/>
        <end position="194"/>
    </location>
</feature>
<feature type="region of interest" description="Dimerization" evidence="3">
    <location>
        <begin position="12"/>
        <end position="59"/>
    </location>
</feature>
<feature type="region of interest" description="Disordered" evidence="5">
    <location>
        <begin position="45"/>
        <end position="194"/>
    </location>
</feature>
<feature type="region of interest" description="RNA-binding" evidence="4">
    <location>
        <begin position="96"/>
        <end position="106"/>
    </location>
</feature>
<feature type="region of interest" description="RNAPII-binding" evidence="4">
    <location>
        <begin position="129"/>
        <end position="194"/>
    </location>
</feature>
<feature type="region of interest" description="RNA-binding" evidence="4">
    <location>
        <begin position="135"/>
        <end position="145"/>
    </location>
</feature>
<feature type="short sequence motif" description="Nuclear localization signal" evidence="2">
    <location>
        <begin position="65"/>
        <end position="74"/>
    </location>
</feature>
<feature type="compositionally biased region" description="Basic and acidic residues" evidence="5">
    <location>
        <begin position="128"/>
        <end position="143"/>
    </location>
</feature>
<feature type="modified residue" description="Phosphoserine; by host CK2" evidence="2">
    <location>
        <position position="2"/>
    </location>
</feature>
<feature type="modified residue" description="Omega-N-methylated arginine; by host PRMT1" evidence="2">
    <location>
        <position position="13"/>
    </location>
</feature>
<feature type="modified residue" description="N6-acetyllysine; by host" evidence="2">
    <location>
        <position position="71"/>
    </location>
</feature>
<feature type="modified residue" description="Phosphoserine; by host" evidence="2">
    <location>
        <position position="122"/>
    </location>
</feature>
<feature type="modified residue" description="Phosphoserine; by host MAPK1 and MAPK3" evidence="2">
    <location>
        <position position="176"/>
    </location>
</feature>
<feature type="modified residue" description="Phosphothreonine; by host" evidence="2">
    <location>
        <position position="181"/>
    </location>
</feature>
<name>SHDAG_HDVV3</name>
<dbReference type="EMBL" id="AB037947">
    <property type="protein sequence ID" value="BAB68379.1"/>
    <property type="molecule type" value="Genomic_RNA"/>
</dbReference>
<dbReference type="SMR" id="Q91DH9"/>
<dbReference type="Proteomes" id="UP000008116">
    <property type="component" value="Genome"/>
</dbReference>
<dbReference type="GO" id="GO:0043657">
    <property type="term" value="C:host cell"/>
    <property type="evidence" value="ECO:0007669"/>
    <property type="project" value="GOC"/>
</dbReference>
<dbReference type="GO" id="GO:0042025">
    <property type="term" value="C:host cell nucleus"/>
    <property type="evidence" value="ECO:0007669"/>
    <property type="project" value="UniProtKB-SubCell"/>
</dbReference>
<dbReference type="GO" id="GO:0044423">
    <property type="term" value="C:virion component"/>
    <property type="evidence" value="ECO:0007669"/>
    <property type="project" value="UniProtKB-KW"/>
</dbReference>
<dbReference type="GO" id="GO:0003723">
    <property type="term" value="F:RNA binding"/>
    <property type="evidence" value="ECO:0007669"/>
    <property type="project" value="UniProtKB-KW"/>
</dbReference>
<dbReference type="GO" id="GO:0046718">
    <property type="term" value="P:symbiont entry into host cell"/>
    <property type="evidence" value="ECO:0007669"/>
    <property type="project" value="UniProtKB-KW"/>
</dbReference>
<dbReference type="GO" id="GO:0075732">
    <property type="term" value="P:viral penetration into host nucleus"/>
    <property type="evidence" value="ECO:0007669"/>
    <property type="project" value="UniProtKB-KW"/>
</dbReference>
<dbReference type="Gene3D" id="4.10.220.40">
    <property type="entry name" value="Delta antigen, N-terminal"/>
    <property type="match status" value="1"/>
</dbReference>
<dbReference type="InterPro" id="IPR027403">
    <property type="entry name" value="Delta_antigen_N"/>
</dbReference>
<dbReference type="InterPro" id="IPR037517">
    <property type="entry name" value="HDAG_dom"/>
</dbReference>
<dbReference type="InterPro" id="IPR002506">
    <property type="entry name" value="HDV_ag"/>
</dbReference>
<dbReference type="Pfam" id="PF01517">
    <property type="entry name" value="HDV_ag"/>
    <property type="match status" value="1"/>
</dbReference>
<dbReference type="SUPFAM" id="SSF58108">
    <property type="entry name" value="Oligomerization domain of hepatitis delta antigen"/>
    <property type="match status" value="1"/>
</dbReference>
<dbReference type="PROSITE" id="PS51838">
    <property type="entry name" value="HDAG"/>
    <property type="match status" value="1"/>
</dbReference>
<organism>
    <name type="scientific">Hepatitis delta virus genotype III (isolate VnzD8375)</name>
    <name type="common">HDV</name>
    <dbReference type="NCBI Taxonomy" id="261995"/>
    <lineage>
        <taxon>Viruses</taxon>
        <taxon>Ribozyviria</taxon>
        <taxon>Kolmioviridae</taxon>
        <taxon>Deltavirus</taxon>
        <taxon>Hepatitis delta virus</taxon>
    </lineage>
</organism>
<accession>Q91DH9</accession>
<comment type="function">
    <text evidence="1">Promotes both transcription and replication of genomic RNA. Following virus entry into host cell, provides nuclear import of HDV RNPs thanks to its nuclear localization signal. May interact with host RNA polymerase II thereby changing its template requirement from DNA to RNA. RNA pol II complex would then acts as an RNA-directed RNA polymerase, and transcribe and replicate HDV genome (By similarity).</text>
</comment>
<comment type="subunit">
    <text evidence="1">Homodimer. Homooctamer. Interacts with host RNA polymerase II complex, and with host NPM1.</text>
</comment>
<comment type="subcellular location">
    <subcellularLocation>
        <location>Virion</location>
    </subcellularLocation>
    <subcellularLocation>
        <location evidence="1">Host nucleus</location>
    </subcellularLocation>
</comment>
<comment type="PTM">
    <text evidence="1">Phosphorylated at serines and threonines by host MAPK1/3, PKR, and CK2.</text>
</comment>
<comment type="PTM">
    <text evidence="1">Acetylation modulates nuclear localization. Neo-synthesized genomic RNA migrates from the nucleus to the cytoplasm, where they interact with S-HDAg, which once acetylated redirect both partners to the nucleus (By similarity).</text>
</comment>
<comment type="PTM">
    <text evidence="1">Methylation plays a role in viral genome replication.</text>
</comment>
<comment type="RNA editing">
    <location>
        <position position="196" evidence="6"/>
    </location>
    <text evidence="1">Partially edited. RNA editing at this position occurs on the antigenomic strand and consists of a conversion of A to G catalyzed by the cellular enzyme ADAR1. The unedited RNA version gives rise to the small delta antigen, which ends with a nonsense codon at position 196. In the edited version, this amber codon is modified to a tryptophan codon and gives rise to the large delta antigen protein (AC P0C6M7). S-HDAg suppresses editing of non-replicating antigenomic RNA, thereby regulating the extent of editing (By similarity).</text>
</comment>
<comment type="miscellaneous">
    <text>This strain belongs to the genotype III found only among cases in South America and which causes a more severe form of infection than genotypes I and II.</text>
</comment>
<comment type="similarity">
    <text evidence="7">Belongs to the hepatitis delta antigen family.</text>
</comment>
<sequence length="194" mass="22060">MSQPDARPGSKAREEALEQWVEERKKKRIAEKELRRINKKIKKLEDENPWLGNIVGMLRKKKDEEGGPPAKRPRREDMEIDSTPGRKSKARGFTDQERRDHRRRKALENKKKQLAGGGKNLSREEEEELRRLARDDDERERRVAGPRPGGVNPMDGPPRGAPGGGFVPSLQGVPESPFSRTGEGIDIRGTQQFP</sequence>
<evidence type="ECO:0000250" key="1"/>
<evidence type="ECO:0000250" key="2">
    <source>
        <dbReference type="UniProtKB" id="P0C6L3"/>
    </source>
</evidence>
<evidence type="ECO:0000255" key="3"/>
<evidence type="ECO:0000255" key="4">
    <source>
        <dbReference type="PROSITE-ProRule" id="PRU01183"/>
    </source>
</evidence>
<evidence type="ECO:0000256" key="5">
    <source>
        <dbReference type="SAM" id="MobiDB-lite"/>
    </source>
</evidence>
<evidence type="ECO:0000269" key="6">
    <source>
    </source>
</evidence>
<evidence type="ECO:0000305" key="7"/>